<gene>
    <name evidence="1" type="primary">secA</name>
    <name type="ordered locus">LHK_03041</name>
</gene>
<organism>
    <name type="scientific">Laribacter hongkongensis (strain HLHK9)</name>
    <dbReference type="NCBI Taxonomy" id="557598"/>
    <lineage>
        <taxon>Bacteria</taxon>
        <taxon>Pseudomonadati</taxon>
        <taxon>Pseudomonadota</taxon>
        <taxon>Betaproteobacteria</taxon>
        <taxon>Neisseriales</taxon>
        <taxon>Aquaspirillaceae</taxon>
        <taxon>Laribacter</taxon>
    </lineage>
</organism>
<name>SECA_LARHH</name>
<reference key="1">
    <citation type="journal article" date="2009" name="PLoS Genet.">
        <title>The complete genome and proteome of Laribacter hongkongensis reveal potential mechanisms for adaptations to different temperatures and habitats.</title>
        <authorList>
            <person name="Woo P.C.Y."/>
            <person name="Lau S.K.P."/>
            <person name="Tse H."/>
            <person name="Teng J.L.L."/>
            <person name="Curreem S.O."/>
            <person name="Tsang A.K.L."/>
            <person name="Fan R.Y.Y."/>
            <person name="Wong G.K.M."/>
            <person name="Huang Y."/>
            <person name="Loman N.J."/>
            <person name="Snyder L.A.S."/>
            <person name="Cai J.J."/>
            <person name="Huang J.-D."/>
            <person name="Mak W."/>
            <person name="Pallen M.J."/>
            <person name="Lok S."/>
            <person name="Yuen K.-Y."/>
        </authorList>
    </citation>
    <scope>NUCLEOTIDE SEQUENCE [LARGE SCALE GENOMIC DNA]</scope>
    <source>
        <strain>HLHK9</strain>
    </source>
</reference>
<sequence>MIANILKKVFGSRNDRLLKQYRAVVNRINALESGLQTLDDAALAGKTAEFRARVEKGERLDSLLPEAFAVCREASRRVMGMRHFDVQLIGGMVLHDGKIAEMRTGEGKTLVATLPAYLNALAGKGVHVVTVNDYLASRDAGIMAPLYNFLGLSVGVNLSQMPHDAKQDAYAADITYGTNNEFGFDYLRDNMVYSPAERVQKPLSFAIVDEVDSILIDEARTPLIISGPADDNVDMYRRMNAIPALLVRQQAEDGEGDYWVDEKAHTVMLSEAGFEHAEAALVAADLLKEGESLYSAANITLMHHLMAALRAHALFHRDQHYVVQDGEIVIVDEFTGRLMAGRRWSEGLHQAVEAKEGVNINRENQTLASITFQNYFRLYKKLAGMTGTADTEAYEFQQIYGLETVVIPTNRPMVRKDSLDLVYRTGQEKYNAILADITDCHQRGQPVLVGTTSIENSELLAGLLKQAGLPHNVLNAKEHAREADIIVQAGRPGVVTVATNMAGRGTDIVLGGNIAPEIKAIESDESLTADDRAQRIAALKAEWQARHDAVLAAGGLHIIGTERHESRRIDNQLRGRSGRQGDPGSSRFYLSLEDPLLRIFASERVSAIMQRLNMPEGEAIEHSWVTRAIENAQRKVEGRNFDIRKQLLEYDDVANDQRRVIYQQRNEILESEEVSDMIAAMRDDVLSQLFDTWMPPQSIEEQWDAAGLMRVLEADYQISVPLADWIKAEPNAELDTFKIRILEQARALYDEKVAAVGAASMQQFERAVLLQHFDGAWREHLAALDHLRQGIHLRGYAQKNPKQEYKREAFELFSLMLDRIKREVTQIVATVQIRSPEEAAAAEAFEHEERPMTYRHDEFTVEGDEAGEGNPFTAEKLAAAGVRVGRNDPCPCGSGKRYKQCHGRLA</sequence>
<keyword id="KW-0067">ATP-binding</keyword>
<keyword id="KW-0997">Cell inner membrane</keyword>
<keyword id="KW-1003">Cell membrane</keyword>
<keyword id="KW-0963">Cytoplasm</keyword>
<keyword id="KW-0472">Membrane</keyword>
<keyword id="KW-0479">Metal-binding</keyword>
<keyword id="KW-0547">Nucleotide-binding</keyword>
<keyword id="KW-0653">Protein transport</keyword>
<keyword id="KW-1185">Reference proteome</keyword>
<keyword id="KW-1278">Translocase</keyword>
<keyword id="KW-0811">Translocation</keyword>
<keyword id="KW-0813">Transport</keyword>
<keyword id="KW-0862">Zinc</keyword>
<feature type="chain" id="PRO_1000184234" description="Protein translocase subunit SecA">
    <location>
        <begin position="1"/>
        <end position="906"/>
    </location>
</feature>
<feature type="binding site" evidence="1">
    <location>
        <position position="87"/>
    </location>
    <ligand>
        <name>ATP</name>
        <dbReference type="ChEBI" id="CHEBI:30616"/>
    </ligand>
</feature>
<feature type="binding site" evidence="1">
    <location>
        <begin position="105"/>
        <end position="109"/>
    </location>
    <ligand>
        <name>ATP</name>
        <dbReference type="ChEBI" id="CHEBI:30616"/>
    </ligand>
</feature>
<feature type="binding site" evidence="1">
    <location>
        <position position="507"/>
    </location>
    <ligand>
        <name>ATP</name>
        <dbReference type="ChEBI" id="CHEBI:30616"/>
    </ligand>
</feature>
<feature type="binding site" evidence="1">
    <location>
        <position position="890"/>
    </location>
    <ligand>
        <name>Zn(2+)</name>
        <dbReference type="ChEBI" id="CHEBI:29105"/>
    </ligand>
</feature>
<feature type="binding site" evidence="1">
    <location>
        <position position="892"/>
    </location>
    <ligand>
        <name>Zn(2+)</name>
        <dbReference type="ChEBI" id="CHEBI:29105"/>
    </ligand>
</feature>
<feature type="binding site" evidence="1">
    <location>
        <position position="901"/>
    </location>
    <ligand>
        <name>Zn(2+)</name>
        <dbReference type="ChEBI" id="CHEBI:29105"/>
    </ligand>
</feature>
<feature type="binding site" evidence="1">
    <location>
        <position position="902"/>
    </location>
    <ligand>
        <name>Zn(2+)</name>
        <dbReference type="ChEBI" id="CHEBI:29105"/>
    </ligand>
</feature>
<comment type="function">
    <text evidence="1">Part of the Sec protein translocase complex. Interacts with the SecYEG preprotein conducting channel. Has a central role in coupling the hydrolysis of ATP to the transfer of proteins into and across the cell membrane, serving both as a receptor for the preprotein-SecB complex and as an ATP-driven molecular motor driving the stepwise translocation of polypeptide chains across the membrane.</text>
</comment>
<comment type="catalytic activity">
    <reaction evidence="1">
        <text>ATP + H2O + cellular proteinSide 1 = ADP + phosphate + cellular proteinSide 2.</text>
        <dbReference type="EC" id="7.4.2.8"/>
    </reaction>
</comment>
<comment type="cofactor">
    <cofactor evidence="1">
        <name>Zn(2+)</name>
        <dbReference type="ChEBI" id="CHEBI:29105"/>
    </cofactor>
    <text evidence="1">May bind 1 zinc ion per subunit.</text>
</comment>
<comment type="subunit">
    <text evidence="1">Monomer and homodimer. Part of the essential Sec protein translocation apparatus which comprises SecA, SecYEG and auxiliary proteins SecDF-YajC and YidC.</text>
</comment>
<comment type="subcellular location">
    <subcellularLocation>
        <location evidence="1">Cell inner membrane</location>
        <topology evidence="1">Peripheral membrane protein</topology>
        <orientation evidence="1">Cytoplasmic side</orientation>
    </subcellularLocation>
    <subcellularLocation>
        <location evidence="1">Cytoplasm</location>
    </subcellularLocation>
    <text evidence="1">Distribution is 50-50.</text>
</comment>
<comment type="similarity">
    <text evidence="1">Belongs to the SecA family.</text>
</comment>
<accession>C1D5K2</accession>
<proteinExistence type="inferred from homology"/>
<protein>
    <recommendedName>
        <fullName evidence="1">Protein translocase subunit SecA</fullName>
        <ecNumber evidence="1">7.4.2.8</ecNumber>
    </recommendedName>
</protein>
<dbReference type="EC" id="7.4.2.8" evidence="1"/>
<dbReference type="EMBL" id="CP001154">
    <property type="protein sequence ID" value="ACO76019.1"/>
    <property type="molecule type" value="Genomic_DNA"/>
</dbReference>
<dbReference type="RefSeq" id="WP_012698482.1">
    <property type="nucleotide sequence ID" value="NC_012559.1"/>
</dbReference>
<dbReference type="SMR" id="C1D5K2"/>
<dbReference type="STRING" id="557598.LHK_03041"/>
<dbReference type="GeneID" id="75108253"/>
<dbReference type="KEGG" id="lhk:LHK_03041"/>
<dbReference type="eggNOG" id="COG0653">
    <property type="taxonomic scope" value="Bacteria"/>
</dbReference>
<dbReference type="HOGENOM" id="CLU_005314_3_0_4"/>
<dbReference type="Proteomes" id="UP000002010">
    <property type="component" value="Chromosome"/>
</dbReference>
<dbReference type="GO" id="GO:0031522">
    <property type="term" value="C:cell envelope Sec protein transport complex"/>
    <property type="evidence" value="ECO:0007669"/>
    <property type="project" value="TreeGrafter"/>
</dbReference>
<dbReference type="GO" id="GO:0005829">
    <property type="term" value="C:cytosol"/>
    <property type="evidence" value="ECO:0007669"/>
    <property type="project" value="TreeGrafter"/>
</dbReference>
<dbReference type="GO" id="GO:0005886">
    <property type="term" value="C:plasma membrane"/>
    <property type="evidence" value="ECO:0007669"/>
    <property type="project" value="UniProtKB-SubCell"/>
</dbReference>
<dbReference type="GO" id="GO:0005524">
    <property type="term" value="F:ATP binding"/>
    <property type="evidence" value="ECO:0007669"/>
    <property type="project" value="UniProtKB-UniRule"/>
</dbReference>
<dbReference type="GO" id="GO:0046872">
    <property type="term" value="F:metal ion binding"/>
    <property type="evidence" value="ECO:0007669"/>
    <property type="project" value="UniProtKB-KW"/>
</dbReference>
<dbReference type="GO" id="GO:0008564">
    <property type="term" value="F:protein-exporting ATPase activity"/>
    <property type="evidence" value="ECO:0007669"/>
    <property type="project" value="UniProtKB-EC"/>
</dbReference>
<dbReference type="GO" id="GO:0065002">
    <property type="term" value="P:intracellular protein transmembrane transport"/>
    <property type="evidence" value="ECO:0007669"/>
    <property type="project" value="UniProtKB-UniRule"/>
</dbReference>
<dbReference type="GO" id="GO:0017038">
    <property type="term" value="P:protein import"/>
    <property type="evidence" value="ECO:0007669"/>
    <property type="project" value="InterPro"/>
</dbReference>
<dbReference type="GO" id="GO:0006605">
    <property type="term" value="P:protein targeting"/>
    <property type="evidence" value="ECO:0007669"/>
    <property type="project" value="UniProtKB-UniRule"/>
</dbReference>
<dbReference type="GO" id="GO:0043952">
    <property type="term" value="P:protein transport by the Sec complex"/>
    <property type="evidence" value="ECO:0007669"/>
    <property type="project" value="TreeGrafter"/>
</dbReference>
<dbReference type="CDD" id="cd17928">
    <property type="entry name" value="DEXDc_SecA"/>
    <property type="match status" value="1"/>
</dbReference>
<dbReference type="CDD" id="cd18803">
    <property type="entry name" value="SF2_C_secA"/>
    <property type="match status" value="1"/>
</dbReference>
<dbReference type="FunFam" id="3.40.50.300:FF:000113">
    <property type="entry name" value="Preprotein translocase subunit SecA"/>
    <property type="match status" value="1"/>
</dbReference>
<dbReference type="FunFam" id="3.90.1440.10:FF:000001">
    <property type="entry name" value="Preprotein translocase subunit SecA"/>
    <property type="match status" value="1"/>
</dbReference>
<dbReference type="FunFam" id="1.10.3060.10:FF:000003">
    <property type="entry name" value="Protein translocase subunit SecA"/>
    <property type="match status" value="1"/>
</dbReference>
<dbReference type="Gene3D" id="1.10.3060.10">
    <property type="entry name" value="Helical scaffold and wing domains of SecA"/>
    <property type="match status" value="1"/>
</dbReference>
<dbReference type="Gene3D" id="3.40.50.300">
    <property type="entry name" value="P-loop containing nucleotide triphosphate hydrolases"/>
    <property type="match status" value="2"/>
</dbReference>
<dbReference type="Gene3D" id="3.90.1440.10">
    <property type="entry name" value="SecA, preprotein cross-linking domain"/>
    <property type="match status" value="1"/>
</dbReference>
<dbReference type="HAMAP" id="MF_01382">
    <property type="entry name" value="SecA"/>
    <property type="match status" value="1"/>
</dbReference>
<dbReference type="InterPro" id="IPR014001">
    <property type="entry name" value="Helicase_ATP-bd"/>
</dbReference>
<dbReference type="InterPro" id="IPR001650">
    <property type="entry name" value="Helicase_C-like"/>
</dbReference>
<dbReference type="InterPro" id="IPR027417">
    <property type="entry name" value="P-loop_NTPase"/>
</dbReference>
<dbReference type="InterPro" id="IPR004027">
    <property type="entry name" value="SEC_C_motif"/>
</dbReference>
<dbReference type="InterPro" id="IPR000185">
    <property type="entry name" value="SecA"/>
</dbReference>
<dbReference type="InterPro" id="IPR020937">
    <property type="entry name" value="SecA_CS"/>
</dbReference>
<dbReference type="InterPro" id="IPR011115">
    <property type="entry name" value="SecA_DEAD"/>
</dbReference>
<dbReference type="InterPro" id="IPR014018">
    <property type="entry name" value="SecA_motor_DEAD"/>
</dbReference>
<dbReference type="InterPro" id="IPR011130">
    <property type="entry name" value="SecA_preprotein_X-link_dom"/>
</dbReference>
<dbReference type="InterPro" id="IPR044722">
    <property type="entry name" value="SecA_SF2_C"/>
</dbReference>
<dbReference type="InterPro" id="IPR011116">
    <property type="entry name" value="SecA_Wing/Scaffold"/>
</dbReference>
<dbReference type="InterPro" id="IPR036266">
    <property type="entry name" value="SecA_Wing/Scaffold_sf"/>
</dbReference>
<dbReference type="InterPro" id="IPR036670">
    <property type="entry name" value="SecA_X-link_sf"/>
</dbReference>
<dbReference type="NCBIfam" id="NF009538">
    <property type="entry name" value="PRK12904.1"/>
    <property type="match status" value="1"/>
</dbReference>
<dbReference type="NCBIfam" id="TIGR00963">
    <property type="entry name" value="secA"/>
    <property type="match status" value="1"/>
</dbReference>
<dbReference type="PANTHER" id="PTHR30612:SF0">
    <property type="entry name" value="CHLOROPLAST PROTEIN-TRANSPORTING ATPASE"/>
    <property type="match status" value="1"/>
</dbReference>
<dbReference type="PANTHER" id="PTHR30612">
    <property type="entry name" value="SECA INNER MEMBRANE COMPONENT OF SEC PROTEIN SECRETION SYSTEM"/>
    <property type="match status" value="1"/>
</dbReference>
<dbReference type="Pfam" id="PF21090">
    <property type="entry name" value="P-loop_SecA"/>
    <property type="match status" value="1"/>
</dbReference>
<dbReference type="Pfam" id="PF02810">
    <property type="entry name" value="SEC-C"/>
    <property type="match status" value="1"/>
</dbReference>
<dbReference type="Pfam" id="PF07517">
    <property type="entry name" value="SecA_DEAD"/>
    <property type="match status" value="1"/>
</dbReference>
<dbReference type="Pfam" id="PF01043">
    <property type="entry name" value="SecA_PP_bind"/>
    <property type="match status" value="1"/>
</dbReference>
<dbReference type="Pfam" id="PF07516">
    <property type="entry name" value="SecA_SW"/>
    <property type="match status" value="1"/>
</dbReference>
<dbReference type="PRINTS" id="PR00906">
    <property type="entry name" value="SECA"/>
</dbReference>
<dbReference type="SMART" id="SM00957">
    <property type="entry name" value="SecA_DEAD"/>
    <property type="match status" value="1"/>
</dbReference>
<dbReference type="SMART" id="SM00958">
    <property type="entry name" value="SecA_PP_bind"/>
    <property type="match status" value="1"/>
</dbReference>
<dbReference type="SUPFAM" id="SSF81886">
    <property type="entry name" value="Helical scaffold and wing domains of SecA"/>
    <property type="match status" value="1"/>
</dbReference>
<dbReference type="SUPFAM" id="SSF52540">
    <property type="entry name" value="P-loop containing nucleoside triphosphate hydrolases"/>
    <property type="match status" value="2"/>
</dbReference>
<dbReference type="SUPFAM" id="SSF81767">
    <property type="entry name" value="Pre-protein crosslinking domain of SecA"/>
    <property type="match status" value="1"/>
</dbReference>
<dbReference type="PROSITE" id="PS01312">
    <property type="entry name" value="SECA"/>
    <property type="match status" value="1"/>
</dbReference>
<dbReference type="PROSITE" id="PS51196">
    <property type="entry name" value="SECA_MOTOR_DEAD"/>
    <property type="match status" value="1"/>
</dbReference>
<evidence type="ECO:0000255" key="1">
    <source>
        <dbReference type="HAMAP-Rule" id="MF_01382"/>
    </source>
</evidence>